<reference key="1">
    <citation type="journal article" date="2008" name="PLoS ONE">
        <title>A recalibrated molecular clock and independent origins for the cholera pandemic clones.</title>
        <authorList>
            <person name="Feng L."/>
            <person name="Reeves P.R."/>
            <person name="Lan R."/>
            <person name="Ren Y."/>
            <person name="Gao C."/>
            <person name="Zhou Z."/>
            <person name="Ren Y."/>
            <person name="Cheng J."/>
            <person name="Wang W."/>
            <person name="Wang J."/>
            <person name="Qian W."/>
            <person name="Li D."/>
            <person name="Wang L."/>
        </authorList>
    </citation>
    <scope>NUCLEOTIDE SEQUENCE [LARGE SCALE GENOMIC DNA]</scope>
    <source>
        <strain>M66-2</strain>
    </source>
</reference>
<proteinExistence type="inferred from homology"/>
<comment type="function">
    <text evidence="1">Hydrolyzes the pyrophosphate bond of UDP-2,3-diacylglucosamine to yield 2,3-diacylglucosamine 1-phosphate (lipid X) and UMP by catalyzing the attack of water at the alpha-P atom. Involved in the biosynthesis of lipid A, a phosphorylated glycolipid that anchors the lipopolysaccharide to the outer membrane of the cell.</text>
</comment>
<comment type="catalytic activity">
    <reaction evidence="1">
        <text>UDP-2-N,3-O-bis[(3R)-3-hydroxytetradecanoyl]-alpha-D-glucosamine + H2O = 2-N,3-O-bis[(3R)-3-hydroxytetradecanoyl]-alpha-D-glucosaminyl 1-phosphate + UMP + 2 H(+)</text>
        <dbReference type="Rhea" id="RHEA:25213"/>
        <dbReference type="ChEBI" id="CHEBI:15377"/>
        <dbReference type="ChEBI" id="CHEBI:15378"/>
        <dbReference type="ChEBI" id="CHEBI:57865"/>
        <dbReference type="ChEBI" id="CHEBI:57957"/>
        <dbReference type="ChEBI" id="CHEBI:78847"/>
        <dbReference type="EC" id="3.6.1.54"/>
    </reaction>
</comment>
<comment type="cofactor">
    <cofactor evidence="1">
        <name>Mn(2+)</name>
        <dbReference type="ChEBI" id="CHEBI:29035"/>
    </cofactor>
    <text evidence="1">Binds 2 Mn(2+) ions per subunit in a binuclear metal center.</text>
</comment>
<comment type="pathway">
    <text evidence="1">Glycolipid biosynthesis; lipid IV(A) biosynthesis; lipid IV(A) from (3R)-3-hydroxytetradecanoyl-[acyl-carrier-protein] and UDP-N-acetyl-alpha-D-glucosamine: step 4/6.</text>
</comment>
<comment type="subcellular location">
    <subcellularLocation>
        <location evidence="1">Cell inner membrane</location>
        <topology evidence="1">Peripheral membrane protein</topology>
        <orientation evidence="1">Cytoplasmic side</orientation>
    </subcellularLocation>
</comment>
<comment type="similarity">
    <text evidence="1">Belongs to the LpxH family.</text>
</comment>
<name>LPXH_VIBCM</name>
<gene>
    <name evidence="1" type="primary">lpxH</name>
    <name type="ordered locus">VCM66_1773</name>
</gene>
<accession>C3LNF3</accession>
<protein>
    <recommendedName>
        <fullName evidence="1">UDP-2,3-diacylglucosamine hydrolase</fullName>
        <ecNumber evidence="1">3.6.1.54</ecNumber>
    </recommendedName>
    <alternativeName>
        <fullName evidence="1">UDP-2,3-diacylglucosamine diphosphatase</fullName>
    </alternativeName>
</protein>
<dbReference type="EC" id="3.6.1.54" evidence="1"/>
<dbReference type="EMBL" id="CP001233">
    <property type="protein sequence ID" value="ACP06079.1"/>
    <property type="molecule type" value="Genomic_DNA"/>
</dbReference>
<dbReference type="RefSeq" id="WP_000557000.1">
    <property type="nucleotide sequence ID" value="NC_012578.1"/>
</dbReference>
<dbReference type="SMR" id="C3LNF3"/>
<dbReference type="KEGG" id="vcm:VCM66_1773"/>
<dbReference type="HOGENOM" id="CLU_074586_0_0_6"/>
<dbReference type="UniPathway" id="UPA00359">
    <property type="reaction ID" value="UER00480"/>
</dbReference>
<dbReference type="Proteomes" id="UP000001217">
    <property type="component" value="Chromosome I"/>
</dbReference>
<dbReference type="GO" id="GO:0005737">
    <property type="term" value="C:cytoplasm"/>
    <property type="evidence" value="ECO:0007669"/>
    <property type="project" value="InterPro"/>
</dbReference>
<dbReference type="GO" id="GO:0019897">
    <property type="term" value="C:extrinsic component of plasma membrane"/>
    <property type="evidence" value="ECO:0007669"/>
    <property type="project" value="UniProtKB-UniRule"/>
</dbReference>
<dbReference type="GO" id="GO:0030145">
    <property type="term" value="F:manganese ion binding"/>
    <property type="evidence" value="ECO:0007669"/>
    <property type="project" value="UniProtKB-UniRule"/>
</dbReference>
<dbReference type="GO" id="GO:0008758">
    <property type="term" value="F:UDP-2,3-diacylglucosamine hydrolase activity"/>
    <property type="evidence" value="ECO:0007669"/>
    <property type="project" value="UniProtKB-UniRule"/>
</dbReference>
<dbReference type="GO" id="GO:0009245">
    <property type="term" value="P:lipid A biosynthetic process"/>
    <property type="evidence" value="ECO:0007669"/>
    <property type="project" value="UniProtKB-UniRule"/>
</dbReference>
<dbReference type="CDD" id="cd07398">
    <property type="entry name" value="MPP_YbbF-LpxH"/>
    <property type="match status" value="1"/>
</dbReference>
<dbReference type="FunFam" id="3.60.21.10:FF:000074">
    <property type="entry name" value="UDP-2,3-diacylglucosamine hydrolase"/>
    <property type="match status" value="1"/>
</dbReference>
<dbReference type="Gene3D" id="3.60.21.10">
    <property type="match status" value="1"/>
</dbReference>
<dbReference type="HAMAP" id="MF_00575">
    <property type="entry name" value="LpxH"/>
    <property type="match status" value="1"/>
</dbReference>
<dbReference type="InterPro" id="IPR004843">
    <property type="entry name" value="Calcineurin-like_PHP_ApaH"/>
</dbReference>
<dbReference type="InterPro" id="IPR043461">
    <property type="entry name" value="LpxH-like"/>
</dbReference>
<dbReference type="InterPro" id="IPR029052">
    <property type="entry name" value="Metallo-depent_PP-like"/>
</dbReference>
<dbReference type="InterPro" id="IPR010138">
    <property type="entry name" value="UDP-diacylglucosamine_Hdrlase"/>
</dbReference>
<dbReference type="NCBIfam" id="TIGR01854">
    <property type="entry name" value="lipid_A_lpxH"/>
    <property type="match status" value="1"/>
</dbReference>
<dbReference type="NCBIfam" id="NF003743">
    <property type="entry name" value="PRK05340.1"/>
    <property type="match status" value="1"/>
</dbReference>
<dbReference type="PANTHER" id="PTHR34990:SF1">
    <property type="entry name" value="UDP-2,3-DIACYLGLUCOSAMINE HYDROLASE"/>
    <property type="match status" value="1"/>
</dbReference>
<dbReference type="PANTHER" id="PTHR34990">
    <property type="entry name" value="UDP-2,3-DIACYLGLUCOSAMINE HYDROLASE-RELATED"/>
    <property type="match status" value="1"/>
</dbReference>
<dbReference type="Pfam" id="PF00149">
    <property type="entry name" value="Metallophos"/>
    <property type="match status" value="1"/>
</dbReference>
<dbReference type="SUPFAM" id="SSF56300">
    <property type="entry name" value="Metallo-dependent phosphatases"/>
    <property type="match status" value="1"/>
</dbReference>
<keyword id="KW-0997">Cell inner membrane</keyword>
<keyword id="KW-1003">Cell membrane</keyword>
<keyword id="KW-0378">Hydrolase</keyword>
<keyword id="KW-0441">Lipid A biosynthesis</keyword>
<keyword id="KW-0444">Lipid biosynthesis</keyword>
<keyword id="KW-0443">Lipid metabolism</keyword>
<keyword id="KW-0464">Manganese</keyword>
<keyword id="KW-0472">Membrane</keyword>
<keyword id="KW-0479">Metal-binding</keyword>
<sequence length="246" mass="28390">MHTLFISDLHLSPKHPDITASFIQFMREEAIKADALYVLGDLFDFWIGDDDPTTFAEQIKSEFRQLTQQGVPCYFTKGNRDFLVGKRFAQQTGVQLLPDEAVIDLYGQKAVVLHGDTLCTQDTRYLEFRAKVHQPWLQRLFGLLPFALKQKLVRKIQSDIRDDKQHKSMMIMDVTPSEVIAVMHRYNVDLMIHGHTHRPAIHSIQTDDQTLKTRIVLGDWYSQSSILVYSKLTGYSLLSRPLINIE</sequence>
<evidence type="ECO:0000255" key="1">
    <source>
        <dbReference type="HAMAP-Rule" id="MF_00575"/>
    </source>
</evidence>
<feature type="chain" id="PRO_1000191033" description="UDP-2,3-diacylglucosamine hydrolase">
    <location>
        <begin position="1"/>
        <end position="246"/>
    </location>
</feature>
<feature type="binding site" evidence="1">
    <location>
        <position position="8"/>
    </location>
    <ligand>
        <name>Mn(2+)</name>
        <dbReference type="ChEBI" id="CHEBI:29035"/>
        <label>1</label>
    </ligand>
</feature>
<feature type="binding site" evidence="1">
    <location>
        <position position="10"/>
    </location>
    <ligand>
        <name>Mn(2+)</name>
        <dbReference type="ChEBI" id="CHEBI:29035"/>
        <label>1</label>
    </ligand>
</feature>
<feature type="binding site" evidence="1">
    <location>
        <position position="41"/>
    </location>
    <ligand>
        <name>Mn(2+)</name>
        <dbReference type="ChEBI" id="CHEBI:29035"/>
        <label>1</label>
    </ligand>
</feature>
<feature type="binding site" evidence="1">
    <location>
        <position position="41"/>
    </location>
    <ligand>
        <name>Mn(2+)</name>
        <dbReference type="ChEBI" id="CHEBI:29035"/>
        <label>2</label>
    </ligand>
</feature>
<feature type="binding site" evidence="1">
    <location>
        <begin position="79"/>
        <end position="80"/>
    </location>
    <ligand>
        <name>substrate</name>
    </ligand>
</feature>
<feature type="binding site" evidence="1">
    <location>
        <position position="79"/>
    </location>
    <ligand>
        <name>Mn(2+)</name>
        <dbReference type="ChEBI" id="CHEBI:29035"/>
        <label>2</label>
    </ligand>
</feature>
<feature type="binding site" evidence="1">
    <location>
        <position position="114"/>
    </location>
    <ligand>
        <name>Mn(2+)</name>
        <dbReference type="ChEBI" id="CHEBI:29035"/>
        <label>2</label>
    </ligand>
</feature>
<feature type="binding site" evidence="1">
    <location>
        <position position="122"/>
    </location>
    <ligand>
        <name>substrate</name>
    </ligand>
</feature>
<feature type="binding site" evidence="1">
    <location>
        <position position="164"/>
    </location>
    <ligand>
        <name>substrate</name>
    </ligand>
</feature>
<feature type="binding site" evidence="1">
    <location>
        <position position="167"/>
    </location>
    <ligand>
        <name>substrate</name>
    </ligand>
</feature>
<feature type="binding site" evidence="1">
    <location>
        <position position="195"/>
    </location>
    <ligand>
        <name>Mn(2+)</name>
        <dbReference type="ChEBI" id="CHEBI:29035"/>
        <label>2</label>
    </ligand>
</feature>
<feature type="binding site" evidence="1">
    <location>
        <position position="195"/>
    </location>
    <ligand>
        <name>substrate</name>
    </ligand>
</feature>
<feature type="binding site" evidence="1">
    <location>
        <position position="197"/>
    </location>
    <ligand>
        <name>Mn(2+)</name>
        <dbReference type="ChEBI" id="CHEBI:29035"/>
        <label>1</label>
    </ligand>
</feature>
<organism>
    <name type="scientific">Vibrio cholerae serotype O1 (strain M66-2)</name>
    <dbReference type="NCBI Taxonomy" id="579112"/>
    <lineage>
        <taxon>Bacteria</taxon>
        <taxon>Pseudomonadati</taxon>
        <taxon>Pseudomonadota</taxon>
        <taxon>Gammaproteobacteria</taxon>
        <taxon>Vibrionales</taxon>
        <taxon>Vibrionaceae</taxon>
        <taxon>Vibrio</taxon>
    </lineage>
</organism>